<feature type="chain" id="PRO_1000197132" description="N-(5'-phosphoribosyl)anthranilate isomerase">
    <location>
        <begin position="1"/>
        <end position="217"/>
    </location>
</feature>
<reference key="1">
    <citation type="submission" date="2005-08" db="EMBL/GenBank/DDBJ databases">
        <title>Complete sequence of chromosome 1 of Synechococcus elongatus PCC 7942.</title>
        <authorList>
            <consortium name="US DOE Joint Genome Institute"/>
            <person name="Copeland A."/>
            <person name="Lucas S."/>
            <person name="Lapidus A."/>
            <person name="Barry K."/>
            <person name="Detter J.C."/>
            <person name="Glavina T."/>
            <person name="Hammon N."/>
            <person name="Israni S."/>
            <person name="Pitluck S."/>
            <person name="Schmutz J."/>
            <person name="Larimer F."/>
            <person name="Land M."/>
            <person name="Kyrpides N."/>
            <person name="Lykidis A."/>
            <person name="Golden S."/>
            <person name="Richardson P."/>
        </authorList>
    </citation>
    <scope>NUCLEOTIDE SEQUENCE [LARGE SCALE GENOMIC DNA]</scope>
    <source>
        <strain>ATCC 33912 / PCC 7942 / FACHB-805</strain>
    </source>
</reference>
<gene>
    <name evidence="1" type="primary">trpF</name>
    <name type="ordered locus">Synpcc7942_0408</name>
</gene>
<name>TRPF_SYNE7</name>
<accession>Q31R79</accession>
<proteinExistence type="inferred from homology"/>
<comment type="catalytic activity">
    <reaction evidence="1">
        <text>N-(5-phospho-beta-D-ribosyl)anthranilate = 1-(2-carboxyphenylamino)-1-deoxy-D-ribulose 5-phosphate</text>
        <dbReference type="Rhea" id="RHEA:21540"/>
        <dbReference type="ChEBI" id="CHEBI:18277"/>
        <dbReference type="ChEBI" id="CHEBI:58613"/>
        <dbReference type="EC" id="5.3.1.24"/>
    </reaction>
</comment>
<comment type="pathway">
    <text evidence="1">Amino-acid biosynthesis; L-tryptophan biosynthesis; L-tryptophan from chorismate: step 3/5.</text>
</comment>
<comment type="similarity">
    <text evidence="1">Belongs to the TrpF family.</text>
</comment>
<sequence>MGLRIKICGLRDPQQAIAIADLGATAIGFIAVRQSPRYVSPAQVAEIAQALQKTHPTVNRVGVFANATAEELEAYVAAGITSLQLHGDETLADCQRWRDRFPALELIKALRIRSTADLALAESFTDCVDTLLLDAYHPQMLGGTGATLDWQALQAFQPSRPWLLAGGLTPENITTALSQLHPAGIDLSSGVERSPGDKDLEKVTALFSSLARNSLLK</sequence>
<dbReference type="EC" id="5.3.1.24" evidence="1"/>
<dbReference type="EMBL" id="CP000100">
    <property type="protein sequence ID" value="ABB56440.1"/>
    <property type="molecule type" value="Genomic_DNA"/>
</dbReference>
<dbReference type="RefSeq" id="WP_011377568.1">
    <property type="nucleotide sequence ID" value="NZ_JACJTX010000002.1"/>
</dbReference>
<dbReference type="SMR" id="Q31R79"/>
<dbReference type="STRING" id="1140.Synpcc7942_0408"/>
<dbReference type="PaxDb" id="1140-Synpcc7942_0408"/>
<dbReference type="KEGG" id="syf:Synpcc7942_0408"/>
<dbReference type="eggNOG" id="COG0135">
    <property type="taxonomic scope" value="Bacteria"/>
</dbReference>
<dbReference type="HOGENOM" id="CLU_076364_2_0_3"/>
<dbReference type="OrthoDB" id="9786954at2"/>
<dbReference type="BioCyc" id="SYNEL:SYNPCC7942_0408-MONOMER"/>
<dbReference type="UniPathway" id="UPA00035">
    <property type="reaction ID" value="UER00042"/>
</dbReference>
<dbReference type="Proteomes" id="UP000889800">
    <property type="component" value="Chromosome"/>
</dbReference>
<dbReference type="GO" id="GO:0004640">
    <property type="term" value="F:phosphoribosylanthranilate isomerase activity"/>
    <property type="evidence" value="ECO:0007669"/>
    <property type="project" value="UniProtKB-UniRule"/>
</dbReference>
<dbReference type="GO" id="GO:0000162">
    <property type="term" value="P:L-tryptophan biosynthetic process"/>
    <property type="evidence" value="ECO:0007669"/>
    <property type="project" value="UniProtKB-UniRule"/>
</dbReference>
<dbReference type="CDD" id="cd00405">
    <property type="entry name" value="PRAI"/>
    <property type="match status" value="1"/>
</dbReference>
<dbReference type="Gene3D" id="3.20.20.70">
    <property type="entry name" value="Aldolase class I"/>
    <property type="match status" value="1"/>
</dbReference>
<dbReference type="HAMAP" id="MF_00135">
    <property type="entry name" value="PRAI"/>
    <property type="match status" value="1"/>
</dbReference>
<dbReference type="InterPro" id="IPR013785">
    <property type="entry name" value="Aldolase_TIM"/>
</dbReference>
<dbReference type="InterPro" id="IPR001240">
    <property type="entry name" value="PRAI_dom"/>
</dbReference>
<dbReference type="InterPro" id="IPR011060">
    <property type="entry name" value="RibuloseP-bd_barrel"/>
</dbReference>
<dbReference type="InterPro" id="IPR044643">
    <property type="entry name" value="TrpF_fam"/>
</dbReference>
<dbReference type="NCBIfam" id="NF002298">
    <property type="entry name" value="PRK01222.1-4"/>
    <property type="match status" value="1"/>
</dbReference>
<dbReference type="PANTHER" id="PTHR42894">
    <property type="entry name" value="N-(5'-PHOSPHORIBOSYL)ANTHRANILATE ISOMERASE"/>
    <property type="match status" value="1"/>
</dbReference>
<dbReference type="PANTHER" id="PTHR42894:SF1">
    <property type="entry name" value="N-(5'-PHOSPHORIBOSYL)ANTHRANILATE ISOMERASE"/>
    <property type="match status" value="1"/>
</dbReference>
<dbReference type="Pfam" id="PF00697">
    <property type="entry name" value="PRAI"/>
    <property type="match status" value="1"/>
</dbReference>
<dbReference type="SUPFAM" id="SSF51366">
    <property type="entry name" value="Ribulose-phoshate binding barrel"/>
    <property type="match status" value="1"/>
</dbReference>
<protein>
    <recommendedName>
        <fullName evidence="1">N-(5'-phosphoribosyl)anthranilate isomerase</fullName>
        <shortName evidence="1">PRAI</shortName>
        <ecNumber evidence="1">5.3.1.24</ecNumber>
    </recommendedName>
</protein>
<evidence type="ECO:0000255" key="1">
    <source>
        <dbReference type="HAMAP-Rule" id="MF_00135"/>
    </source>
</evidence>
<organism>
    <name type="scientific">Synechococcus elongatus (strain ATCC 33912 / PCC 7942 / FACHB-805)</name>
    <name type="common">Anacystis nidulans R2</name>
    <dbReference type="NCBI Taxonomy" id="1140"/>
    <lineage>
        <taxon>Bacteria</taxon>
        <taxon>Bacillati</taxon>
        <taxon>Cyanobacteriota</taxon>
        <taxon>Cyanophyceae</taxon>
        <taxon>Synechococcales</taxon>
        <taxon>Synechococcaceae</taxon>
        <taxon>Synechococcus</taxon>
    </lineage>
</organism>
<keyword id="KW-0028">Amino-acid biosynthesis</keyword>
<keyword id="KW-0057">Aromatic amino acid biosynthesis</keyword>
<keyword id="KW-0413">Isomerase</keyword>
<keyword id="KW-1185">Reference proteome</keyword>
<keyword id="KW-0822">Tryptophan biosynthesis</keyword>